<comment type="function">
    <text evidence="1">Produces ATP from ADP in the presence of a proton gradient across the membrane.</text>
</comment>
<comment type="subunit">
    <text evidence="1">F-type ATPases have 2 components, CF(1) - the catalytic core - and CF(0) - the membrane proton channel. CF(1) has five subunits: alpha(3), beta(3), gamma(1), delta(1), epsilon(1). CF(0) has three main subunits: a, b and c.</text>
</comment>
<comment type="subcellular location">
    <subcellularLocation>
        <location evidence="1">Cell membrane</location>
        <topology evidence="1">Peripheral membrane protein</topology>
    </subcellularLocation>
</comment>
<comment type="similarity">
    <text evidence="1">Belongs to the ATPase epsilon chain family.</text>
</comment>
<organism>
    <name type="scientific">Staphylococcus aureus (strain JH1)</name>
    <dbReference type="NCBI Taxonomy" id="359787"/>
    <lineage>
        <taxon>Bacteria</taxon>
        <taxon>Bacillati</taxon>
        <taxon>Bacillota</taxon>
        <taxon>Bacilli</taxon>
        <taxon>Bacillales</taxon>
        <taxon>Staphylococcaceae</taxon>
        <taxon>Staphylococcus</taxon>
    </lineage>
</organism>
<evidence type="ECO:0000255" key="1">
    <source>
        <dbReference type="HAMAP-Rule" id="MF_00530"/>
    </source>
</evidence>
<gene>
    <name evidence="1" type="primary">atpC</name>
    <name type="ordered locus">SaurJH1_2176</name>
</gene>
<name>ATPE_STAA2</name>
<feature type="chain" id="PRO_1000081749" description="ATP synthase epsilon chain">
    <location>
        <begin position="1"/>
        <end position="134"/>
    </location>
</feature>
<dbReference type="EMBL" id="CP000736">
    <property type="protein sequence ID" value="ABR53005.1"/>
    <property type="molecule type" value="Genomic_DNA"/>
</dbReference>
<dbReference type="SMR" id="A6U3I7"/>
<dbReference type="KEGG" id="sah:SaurJH1_2176"/>
<dbReference type="HOGENOM" id="CLU_084338_1_3_9"/>
<dbReference type="GO" id="GO:0005886">
    <property type="term" value="C:plasma membrane"/>
    <property type="evidence" value="ECO:0007669"/>
    <property type="project" value="UniProtKB-SubCell"/>
</dbReference>
<dbReference type="GO" id="GO:0045259">
    <property type="term" value="C:proton-transporting ATP synthase complex"/>
    <property type="evidence" value="ECO:0007669"/>
    <property type="project" value="UniProtKB-KW"/>
</dbReference>
<dbReference type="GO" id="GO:0005524">
    <property type="term" value="F:ATP binding"/>
    <property type="evidence" value="ECO:0007669"/>
    <property type="project" value="UniProtKB-UniRule"/>
</dbReference>
<dbReference type="GO" id="GO:0046933">
    <property type="term" value="F:proton-transporting ATP synthase activity, rotational mechanism"/>
    <property type="evidence" value="ECO:0007669"/>
    <property type="project" value="UniProtKB-UniRule"/>
</dbReference>
<dbReference type="CDD" id="cd12152">
    <property type="entry name" value="F1-ATPase_delta"/>
    <property type="match status" value="1"/>
</dbReference>
<dbReference type="FunFam" id="1.20.5.440:FF:000001">
    <property type="entry name" value="ATP synthase epsilon chain"/>
    <property type="match status" value="1"/>
</dbReference>
<dbReference type="FunFam" id="2.60.15.10:FF:000001">
    <property type="entry name" value="ATP synthase epsilon chain"/>
    <property type="match status" value="1"/>
</dbReference>
<dbReference type="Gene3D" id="1.20.5.440">
    <property type="entry name" value="ATP synthase delta/epsilon subunit, C-terminal domain"/>
    <property type="match status" value="1"/>
</dbReference>
<dbReference type="Gene3D" id="2.60.15.10">
    <property type="entry name" value="F0F1 ATP synthase delta/epsilon subunit, N-terminal"/>
    <property type="match status" value="1"/>
</dbReference>
<dbReference type="HAMAP" id="MF_00530">
    <property type="entry name" value="ATP_synth_epsil_bac"/>
    <property type="match status" value="1"/>
</dbReference>
<dbReference type="InterPro" id="IPR036794">
    <property type="entry name" value="ATP_F1_dsu/esu_C_sf"/>
</dbReference>
<dbReference type="InterPro" id="IPR001469">
    <property type="entry name" value="ATP_synth_F1_dsu/esu"/>
</dbReference>
<dbReference type="InterPro" id="IPR020546">
    <property type="entry name" value="ATP_synth_F1_dsu/esu_N"/>
</dbReference>
<dbReference type="InterPro" id="IPR020547">
    <property type="entry name" value="ATP_synth_F1_esu_C"/>
</dbReference>
<dbReference type="InterPro" id="IPR036771">
    <property type="entry name" value="ATPsynth_dsu/esu_N"/>
</dbReference>
<dbReference type="NCBIfam" id="TIGR01216">
    <property type="entry name" value="ATP_synt_epsi"/>
    <property type="match status" value="1"/>
</dbReference>
<dbReference type="NCBIfam" id="NF001846">
    <property type="entry name" value="PRK00571.1-3"/>
    <property type="match status" value="1"/>
</dbReference>
<dbReference type="NCBIfam" id="NF009980">
    <property type="entry name" value="PRK13446.1"/>
    <property type="match status" value="1"/>
</dbReference>
<dbReference type="PANTHER" id="PTHR13822">
    <property type="entry name" value="ATP SYNTHASE DELTA/EPSILON CHAIN"/>
    <property type="match status" value="1"/>
</dbReference>
<dbReference type="PANTHER" id="PTHR13822:SF10">
    <property type="entry name" value="ATP SYNTHASE EPSILON CHAIN, CHLOROPLASTIC"/>
    <property type="match status" value="1"/>
</dbReference>
<dbReference type="Pfam" id="PF00401">
    <property type="entry name" value="ATP-synt_DE"/>
    <property type="match status" value="1"/>
</dbReference>
<dbReference type="Pfam" id="PF02823">
    <property type="entry name" value="ATP-synt_DE_N"/>
    <property type="match status" value="1"/>
</dbReference>
<dbReference type="SUPFAM" id="SSF46604">
    <property type="entry name" value="Epsilon subunit of F1F0-ATP synthase C-terminal domain"/>
    <property type="match status" value="1"/>
</dbReference>
<dbReference type="SUPFAM" id="SSF51344">
    <property type="entry name" value="Epsilon subunit of F1F0-ATP synthase N-terminal domain"/>
    <property type="match status" value="1"/>
</dbReference>
<reference key="1">
    <citation type="submission" date="2007-06" db="EMBL/GenBank/DDBJ databases">
        <title>Complete sequence of chromosome of Staphylococcus aureus subsp. aureus JH1.</title>
        <authorList>
            <consortium name="US DOE Joint Genome Institute"/>
            <person name="Copeland A."/>
            <person name="Lucas S."/>
            <person name="Lapidus A."/>
            <person name="Barry K."/>
            <person name="Detter J.C."/>
            <person name="Glavina del Rio T."/>
            <person name="Hammon N."/>
            <person name="Israni S."/>
            <person name="Dalin E."/>
            <person name="Tice H."/>
            <person name="Pitluck S."/>
            <person name="Chain P."/>
            <person name="Malfatti S."/>
            <person name="Shin M."/>
            <person name="Vergez L."/>
            <person name="Schmutz J."/>
            <person name="Larimer F."/>
            <person name="Land M."/>
            <person name="Hauser L."/>
            <person name="Kyrpides N."/>
            <person name="Ivanova N."/>
            <person name="Tomasz A."/>
            <person name="Richardson P."/>
        </authorList>
    </citation>
    <scope>NUCLEOTIDE SEQUENCE [LARGE SCALE GENOMIC DNA]</scope>
    <source>
        <strain>JH1</strain>
    </source>
</reference>
<accession>A6U3I7</accession>
<protein>
    <recommendedName>
        <fullName evidence="1">ATP synthase epsilon chain</fullName>
    </recommendedName>
    <alternativeName>
        <fullName evidence="1">ATP synthase F1 sector epsilon subunit</fullName>
    </alternativeName>
    <alternativeName>
        <fullName evidence="1">F-ATPase epsilon subunit</fullName>
    </alternativeName>
</protein>
<sequence length="134" mass="14844">MNTLNLDIVTPNGSVYNRDNVELVVMQTTAGEIGVMSGHIPTVAALKTGFVKVKFHDGTEYIAVSDGFVEVRKDKVSIIVQTAETAREIDVERAKLAKARAESHLENDDDNTDIHRAERALERANNRLRVAELK</sequence>
<proteinExistence type="inferred from homology"/>
<keyword id="KW-0066">ATP synthesis</keyword>
<keyword id="KW-1003">Cell membrane</keyword>
<keyword id="KW-0139">CF(1)</keyword>
<keyword id="KW-0375">Hydrogen ion transport</keyword>
<keyword id="KW-0406">Ion transport</keyword>
<keyword id="KW-0472">Membrane</keyword>
<keyword id="KW-0813">Transport</keyword>